<organism>
    <name type="scientific">Spiroplasma apis</name>
    <dbReference type="NCBI Taxonomy" id="2137"/>
    <lineage>
        <taxon>Bacteria</taxon>
        <taxon>Bacillati</taxon>
        <taxon>Mycoplasmatota</taxon>
        <taxon>Mollicutes</taxon>
        <taxon>Entomoplasmatales</taxon>
        <taxon>Spiroplasmataceae</taxon>
        <taxon>Spiroplasma</taxon>
    </lineage>
</organism>
<evidence type="ECO:0000255" key="1">
    <source>
        <dbReference type="HAMAP-Rule" id="MF_00377"/>
    </source>
</evidence>
<accession>P35892</accession>
<sequence>DSGLGKTHLLKAIAHEIGNTKNKLVVKYYTSSDFRKEIVDSLQDGFKEIESTKEKLSKIDVLLIDDIQFLANSGKTNEIFFNLFNFFIENNKQIVLTSDKFPEQLNGFDKRLVSRFSQGLNVKVETPDIITAINIVDYKAKIVNLNLSEESKKYIASFFGSDVRKIEGIINKIEFSIIQDNSAAPKIIELEDINKFLEDYSFAPGGEITVQKIKNVVAQNYGISVKSIDSRLRMANIVKARHVAMFLTGEILKKNYSEIGVAF</sequence>
<keyword id="KW-0067">ATP-binding</keyword>
<keyword id="KW-0963">Cytoplasm</keyword>
<keyword id="KW-0235">DNA replication</keyword>
<keyword id="KW-0238">DNA-binding</keyword>
<keyword id="KW-0446">Lipid-binding</keyword>
<keyword id="KW-0547">Nucleotide-binding</keyword>
<protein>
    <recommendedName>
        <fullName evidence="1">Chromosomal replication initiator protein DnaA</fullName>
    </recommendedName>
</protein>
<proteinExistence type="inferred from homology"/>
<feature type="chain" id="PRO_0000114256" description="Chromosomal replication initiator protein DnaA">
    <location>
        <begin position="1" status="less than"/>
        <end position="263" status="greater than"/>
    </location>
</feature>
<feature type="region of interest" description="Domain III, AAA+ region" evidence="1">
    <location>
        <begin position="1"/>
        <end position="177"/>
    </location>
</feature>
<feature type="region of interest" description="Domain I, interacts with DnaA modulators" evidence="1">
    <location>
        <position position="1"/>
    </location>
</feature>
<feature type="region of interest" description="Domain II" evidence="1">
    <location>
        <position position="1"/>
    </location>
</feature>
<feature type="region of interest" description="Domain IV, binds dsDNA" evidence="1">
    <location>
        <begin position="178"/>
        <end position="263"/>
    </location>
</feature>
<feature type="binding site" evidence="1">
    <location>
        <position position="3"/>
    </location>
    <ligand>
        <name>ATP</name>
        <dbReference type="ChEBI" id="CHEBI:30616"/>
    </ligand>
</feature>
<feature type="binding site" evidence="1">
    <location>
        <position position="5"/>
    </location>
    <ligand>
        <name>ATP</name>
        <dbReference type="ChEBI" id="CHEBI:30616"/>
    </ligand>
</feature>
<feature type="binding site" evidence="1">
    <location>
        <position position="6"/>
    </location>
    <ligand>
        <name>ATP</name>
        <dbReference type="ChEBI" id="CHEBI:30616"/>
    </ligand>
</feature>
<feature type="binding site" evidence="1">
    <location>
        <position position="7"/>
    </location>
    <ligand>
        <name>ATP</name>
        <dbReference type="ChEBI" id="CHEBI:30616"/>
    </ligand>
</feature>
<feature type="non-terminal residue">
    <location>
        <position position="1"/>
    </location>
</feature>
<feature type="non-terminal residue">
    <location>
        <position position="263"/>
    </location>
</feature>
<reference key="1">
    <citation type="journal article" date="1993" name="FEMS Microbiol. Lett.">
        <title>Comparison of the conserved region in the dnaA gene from three mollicute species.</title>
        <authorList>
            <person name="Suzuki K."/>
            <person name="Miyata M."/>
            <person name="Fukumura T."/>
        </authorList>
    </citation>
    <scope>NUCLEOTIDE SEQUENCE [GENOMIC DNA]</scope>
    <source>
        <strain>ATCC 33834 / B31</strain>
    </source>
</reference>
<gene>
    <name evidence="1" type="primary">dnaA</name>
</gene>
<dbReference type="EMBL" id="D14986">
    <property type="protein sequence ID" value="BAA03631.1"/>
    <property type="molecule type" value="Genomic_DNA"/>
</dbReference>
<dbReference type="SMR" id="P35892"/>
<dbReference type="GO" id="GO:0005737">
    <property type="term" value="C:cytoplasm"/>
    <property type="evidence" value="ECO:0007669"/>
    <property type="project" value="UniProtKB-SubCell"/>
</dbReference>
<dbReference type="GO" id="GO:0005886">
    <property type="term" value="C:plasma membrane"/>
    <property type="evidence" value="ECO:0007669"/>
    <property type="project" value="TreeGrafter"/>
</dbReference>
<dbReference type="GO" id="GO:0005524">
    <property type="term" value="F:ATP binding"/>
    <property type="evidence" value="ECO:0007669"/>
    <property type="project" value="UniProtKB-KW"/>
</dbReference>
<dbReference type="GO" id="GO:0003688">
    <property type="term" value="F:DNA replication origin binding"/>
    <property type="evidence" value="ECO:0007669"/>
    <property type="project" value="TreeGrafter"/>
</dbReference>
<dbReference type="GO" id="GO:0008289">
    <property type="term" value="F:lipid binding"/>
    <property type="evidence" value="ECO:0007669"/>
    <property type="project" value="UniProtKB-KW"/>
</dbReference>
<dbReference type="GO" id="GO:0006270">
    <property type="term" value="P:DNA replication initiation"/>
    <property type="evidence" value="ECO:0007669"/>
    <property type="project" value="InterPro"/>
</dbReference>
<dbReference type="GO" id="GO:0006275">
    <property type="term" value="P:regulation of DNA replication"/>
    <property type="evidence" value="ECO:0007669"/>
    <property type="project" value="InterPro"/>
</dbReference>
<dbReference type="CDD" id="cd00009">
    <property type="entry name" value="AAA"/>
    <property type="match status" value="1"/>
</dbReference>
<dbReference type="Gene3D" id="1.10.1750.10">
    <property type="match status" value="1"/>
</dbReference>
<dbReference type="Gene3D" id="1.10.8.60">
    <property type="match status" value="1"/>
</dbReference>
<dbReference type="Gene3D" id="3.40.50.300">
    <property type="entry name" value="P-loop containing nucleotide triphosphate hydrolases"/>
    <property type="match status" value="1"/>
</dbReference>
<dbReference type="InterPro" id="IPR020591">
    <property type="entry name" value="Chromosome_initiator_DnaA-like"/>
</dbReference>
<dbReference type="InterPro" id="IPR013159">
    <property type="entry name" value="DnaA_C"/>
</dbReference>
<dbReference type="InterPro" id="IPR013317">
    <property type="entry name" value="DnaA_dom"/>
</dbReference>
<dbReference type="InterPro" id="IPR027417">
    <property type="entry name" value="P-loop_NTPase"/>
</dbReference>
<dbReference type="InterPro" id="IPR010921">
    <property type="entry name" value="Trp_repressor/repl_initiator"/>
</dbReference>
<dbReference type="PANTHER" id="PTHR30050">
    <property type="entry name" value="CHROMOSOMAL REPLICATION INITIATOR PROTEIN DNAA"/>
    <property type="match status" value="1"/>
</dbReference>
<dbReference type="PANTHER" id="PTHR30050:SF2">
    <property type="entry name" value="CHROMOSOMAL REPLICATION INITIATOR PROTEIN DNAA"/>
    <property type="match status" value="1"/>
</dbReference>
<dbReference type="Pfam" id="PF00308">
    <property type="entry name" value="Bac_DnaA"/>
    <property type="match status" value="1"/>
</dbReference>
<dbReference type="Pfam" id="PF08299">
    <property type="entry name" value="Bac_DnaA_C"/>
    <property type="match status" value="1"/>
</dbReference>
<dbReference type="PRINTS" id="PR00051">
    <property type="entry name" value="DNAA"/>
</dbReference>
<dbReference type="SMART" id="SM00760">
    <property type="entry name" value="Bac_DnaA_C"/>
    <property type="match status" value="1"/>
</dbReference>
<dbReference type="SUPFAM" id="SSF52540">
    <property type="entry name" value="P-loop containing nucleoside triphosphate hydrolases"/>
    <property type="match status" value="1"/>
</dbReference>
<dbReference type="SUPFAM" id="SSF48295">
    <property type="entry name" value="TrpR-like"/>
    <property type="match status" value="1"/>
</dbReference>
<comment type="function">
    <text evidence="1">Plays an essential role in the initiation and regulation of chromosomal replication. ATP-DnaA binds to the origin of replication (oriC) to initiate formation of the DNA replication initiation complex once per cell cycle. Binds the DnaA box (a 9 base pair repeat at the origin) and separates the double-stranded (ds)DNA. Forms a right-handed helical filament on oriC DNA; dsDNA binds to the exterior of the filament while single-stranded (ss)DNA is stabiized in the filament's interior. The ATP-DnaA-oriC complex binds and stabilizes one strand of the AT-rich DNA unwinding element (DUE), permitting loading of DNA polymerase. After initiation quickly degrades to an ADP-DnaA complex that is not apt for DNA replication. Binds acidic phospholipids.</text>
</comment>
<comment type="subunit">
    <text evidence="1">Oligomerizes as a right-handed, spiral filament on DNA at oriC.</text>
</comment>
<comment type="subcellular location">
    <subcellularLocation>
        <location evidence="1">Cytoplasm</location>
    </subcellularLocation>
</comment>
<comment type="domain">
    <text evidence="1">Domain I is involved in oligomerization and binding regulators, domain II is flexibile and of varying length in different bacteria, domain III forms the AAA+ region, while domain IV binds dsDNA.</text>
</comment>
<comment type="similarity">
    <text evidence="1">Belongs to the DnaA family.</text>
</comment>
<name>DNAA_SPIAP</name>